<accession>A7ZDX8</accession>
<evidence type="ECO:0000255" key="1">
    <source>
        <dbReference type="HAMAP-Rule" id="MF_00014"/>
    </source>
</evidence>
<sequence length="176" mass="20224">MNSDIVEVATIGRCVGLKGYLKLHNKSDFPEQFKKGATFFDKNDDQLIIKDYNRQKELVLFEKFDDLDLAKTLVNKTIYTTKELTRKNCKLKKDEFFQFDIIGLKVVENGEILGIVEDIQDNFANSLLYIKTDEVLIAAGKPKNFYIPYLERFIESVNLDSGEILVKGARDILENS</sequence>
<proteinExistence type="inferred from homology"/>
<keyword id="KW-0143">Chaperone</keyword>
<keyword id="KW-0963">Cytoplasm</keyword>
<keyword id="KW-0690">Ribosome biogenesis</keyword>
<keyword id="KW-0698">rRNA processing</keyword>
<gene>
    <name evidence="1" type="primary">rimM</name>
    <name type="ordered locus">Ccon26_11280</name>
    <name type="ORF">CCC13826_1431</name>
</gene>
<comment type="function">
    <text evidence="1">An accessory protein needed during the final step in the assembly of 30S ribosomal subunit, possibly for assembly of the head region. Essential for efficient processing of 16S rRNA. May be needed both before and after RbfA during the maturation of 16S rRNA. It has affinity for free ribosomal 30S subunits but not for 70S ribosomes.</text>
</comment>
<comment type="subunit">
    <text evidence="1">Binds ribosomal protein uS19.</text>
</comment>
<comment type="subcellular location">
    <subcellularLocation>
        <location evidence="1">Cytoplasm</location>
    </subcellularLocation>
</comment>
<comment type="domain">
    <text evidence="1">The PRC barrel domain binds ribosomal protein uS19.</text>
</comment>
<comment type="similarity">
    <text evidence="1">Belongs to the RimM family.</text>
</comment>
<name>RIMM_CAMC1</name>
<feature type="chain" id="PRO_0000321717" description="Ribosome maturation factor RimM">
    <location>
        <begin position="1"/>
        <end position="176"/>
    </location>
</feature>
<feature type="domain" description="PRC barrel" evidence="1">
    <location>
        <begin position="93"/>
        <end position="172"/>
    </location>
</feature>
<protein>
    <recommendedName>
        <fullName evidence="1">Ribosome maturation factor RimM</fullName>
    </recommendedName>
</protein>
<reference key="1">
    <citation type="submission" date="2007-10" db="EMBL/GenBank/DDBJ databases">
        <title>Genome sequence of Campylobacter concisus 13826 isolated from human feces.</title>
        <authorList>
            <person name="Fouts D.E."/>
            <person name="Mongodin E.F."/>
            <person name="Puiu D."/>
            <person name="Sebastian Y."/>
            <person name="Miller W.G."/>
            <person name="Mandrell R.E."/>
            <person name="On S."/>
            <person name="Nelson K.E."/>
        </authorList>
    </citation>
    <scope>NUCLEOTIDE SEQUENCE [LARGE SCALE GENOMIC DNA]</scope>
    <source>
        <strain>13826</strain>
    </source>
</reference>
<organism>
    <name type="scientific">Campylobacter concisus (strain 13826)</name>
    <dbReference type="NCBI Taxonomy" id="360104"/>
    <lineage>
        <taxon>Bacteria</taxon>
        <taxon>Pseudomonadati</taxon>
        <taxon>Campylobacterota</taxon>
        <taxon>Epsilonproteobacteria</taxon>
        <taxon>Campylobacterales</taxon>
        <taxon>Campylobacteraceae</taxon>
        <taxon>Campylobacter</taxon>
    </lineage>
</organism>
<dbReference type="EMBL" id="CP000792">
    <property type="protein sequence ID" value="EAT98295.1"/>
    <property type="molecule type" value="Genomic_DNA"/>
</dbReference>
<dbReference type="RefSeq" id="WP_012139917.1">
    <property type="nucleotide sequence ID" value="NC_009802.2"/>
</dbReference>
<dbReference type="SMR" id="A7ZDX8"/>
<dbReference type="STRING" id="360104.CCC13826_1431"/>
<dbReference type="KEGG" id="cco:CCC13826_1431"/>
<dbReference type="eggNOG" id="COG0806">
    <property type="taxonomic scope" value="Bacteria"/>
</dbReference>
<dbReference type="HOGENOM" id="CLU_077636_2_0_7"/>
<dbReference type="OrthoDB" id="9810331at2"/>
<dbReference type="Proteomes" id="UP000001121">
    <property type="component" value="Chromosome"/>
</dbReference>
<dbReference type="GO" id="GO:0005737">
    <property type="term" value="C:cytoplasm"/>
    <property type="evidence" value="ECO:0007669"/>
    <property type="project" value="UniProtKB-SubCell"/>
</dbReference>
<dbReference type="GO" id="GO:0005840">
    <property type="term" value="C:ribosome"/>
    <property type="evidence" value="ECO:0007669"/>
    <property type="project" value="InterPro"/>
</dbReference>
<dbReference type="GO" id="GO:0043022">
    <property type="term" value="F:ribosome binding"/>
    <property type="evidence" value="ECO:0007669"/>
    <property type="project" value="InterPro"/>
</dbReference>
<dbReference type="GO" id="GO:0042274">
    <property type="term" value="P:ribosomal small subunit biogenesis"/>
    <property type="evidence" value="ECO:0007669"/>
    <property type="project" value="UniProtKB-UniRule"/>
</dbReference>
<dbReference type="GO" id="GO:0006364">
    <property type="term" value="P:rRNA processing"/>
    <property type="evidence" value="ECO:0007669"/>
    <property type="project" value="UniProtKB-UniRule"/>
</dbReference>
<dbReference type="Gene3D" id="2.30.30.240">
    <property type="entry name" value="PRC-barrel domain"/>
    <property type="match status" value="1"/>
</dbReference>
<dbReference type="Gene3D" id="2.40.30.60">
    <property type="entry name" value="RimM"/>
    <property type="match status" value="1"/>
</dbReference>
<dbReference type="HAMAP" id="MF_00014">
    <property type="entry name" value="Ribosome_mat_RimM"/>
    <property type="match status" value="1"/>
</dbReference>
<dbReference type="InterPro" id="IPR011033">
    <property type="entry name" value="PRC_barrel-like_sf"/>
</dbReference>
<dbReference type="InterPro" id="IPR056792">
    <property type="entry name" value="PRC_RimM"/>
</dbReference>
<dbReference type="InterPro" id="IPR011961">
    <property type="entry name" value="RimM"/>
</dbReference>
<dbReference type="InterPro" id="IPR002676">
    <property type="entry name" value="RimM_N"/>
</dbReference>
<dbReference type="InterPro" id="IPR036976">
    <property type="entry name" value="RimM_N_sf"/>
</dbReference>
<dbReference type="InterPro" id="IPR009000">
    <property type="entry name" value="Transl_B-barrel_sf"/>
</dbReference>
<dbReference type="NCBIfam" id="TIGR02273">
    <property type="entry name" value="16S_RimM"/>
    <property type="match status" value="1"/>
</dbReference>
<dbReference type="PANTHER" id="PTHR33692">
    <property type="entry name" value="RIBOSOME MATURATION FACTOR RIMM"/>
    <property type="match status" value="1"/>
</dbReference>
<dbReference type="PANTHER" id="PTHR33692:SF1">
    <property type="entry name" value="RIBOSOME MATURATION FACTOR RIMM"/>
    <property type="match status" value="1"/>
</dbReference>
<dbReference type="Pfam" id="PF24986">
    <property type="entry name" value="PRC_RimM"/>
    <property type="match status" value="1"/>
</dbReference>
<dbReference type="Pfam" id="PF01782">
    <property type="entry name" value="RimM"/>
    <property type="match status" value="1"/>
</dbReference>
<dbReference type="SUPFAM" id="SSF50346">
    <property type="entry name" value="PRC-barrel domain"/>
    <property type="match status" value="1"/>
</dbReference>
<dbReference type="SUPFAM" id="SSF50447">
    <property type="entry name" value="Translation proteins"/>
    <property type="match status" value="1"/>
</dbReference>